<dbReference type="EC" id="4.1.1.37" evidence="1"/>
<dbReference type="EMBL" id="CP001488">
    <property type="protein sequence ID" value="ACO01775.1"/>
    <property type="molecule type" value="Genomic_DNA"/>
</dbReference>
<dbReference type="RefSeq" id="WP_004684534.1">
    <property type="nucleotide sequence ID" value="NC_012441.1"/>
</dbReference>
<dbReference type="SMR" id="C0RFV3"/>
<dbReference type="GeneID" id="29594977"/>
<dbReference type="KEGG" id="bmi:BMEA_A2127"/>
<dbReference type="HOGENOM" id="CLU_040933_0_0_5"/>
<dbReference type="UniPathway" id="UPA00251">
    <property type="reaction ID" value="UER00321"/>
</dbReference>
<dbReference type="Proteomes" id="UP000001748">
    <property type="component" value="Chromosome I"/>
</dbReference>
<dbReference type="GO" id="GO:0005829">
    <property type="term" value="C:cytosol"/>
    <property type="evidence" value="ECO:0007669"/>
    <property type="project" value="TreeGrafter"/>
</dbReference>
<dbReference type="GO" id="GO:0004853">
    <property type="term" value="F:uroporphyrinogen decarboxylase activity"/>
    <property type="evidence" value="ECO:0007669"/>
    <property type="project" value="UniProtKB-UniRule"/>
</dbReference>
<dbReference type="GO" id="GO:0019353">
    <property type="term" value="P:protoporphyrinogen IX biosynthetic process from glutamate"/>
    <property type="evidence" value="ECO:0007669"/>
    <property type="project" value="TreeGrafter"/>
</dbReference>
<dbReference type="CDD" id="cd00717">
    <property type="entry name" value="URO-D"/>
    <property type="match status" value="1"/>
</dbReference>
<dbReference type="FunFam" id="3.20.20.210:FF:000007">
    <property type="entry name" value="Uroporphyrinogen decarboxylase"/>
    <property type="match status" value="1"/>
</dbReference>
<dbReference type="Gene3D" id="3.20.20.210">
    <property type="match status" value="1"/>
</dbReference>
<dbReference type="HAMAP" id="MF_00218">
    <property type="entry name" value="URO_D"/>
    <property type="match status" value="1"/>
</dbReference>
<dbReference type="InterPro" id="IPR038071">
    <property type="entry name" value="UROD/MetE-like_sf"/>
</dbReference>
<dbReference type="InterPro" id="IPR006361">
    <property type="entry name" value="Uroporphyrinogen_deCO2ase_HemE"/>
</dbReference>
<dbReference type="InterPro" id="IPR000257">
    <property type="entry name" value="Uroporphyrinogen_deCOase"/>
</dbReference>
<dbReference type="NCBIfam" id="TIGR01464">
    <property type="entry name" value="hemE"/>
    <property type="match status" value="1"/>
</dbReference>
<dbReference type="PANTHER" id="PTHR21091">
    <property type="entry name" value="METHYLTETRAHYDROFOLATE:HOMOCYSTEINE METHYLTRANSFERASE RELATED"/>
    <property type="match status" value="1"/>
</dbReference>
<dbReference type="PANTHER" id="PTHR21091:SF169">
    <property type="entry name" value="UROPORPHYRINOGEN DECARBOXYLASE"/>
    <property type="match status" value="1"/>
</dbReference>
<dbReference type="Pfam" id="PF01208">
    <property type="entry name" value="URO-D"/>
    <property type="match status" value="1"/>
</dbReference>
<dbReference type="SUPFAM" id="SSF51726">
    <property type="entry name" value="UROD/MetE-like"/>
    <property type="match status" value="1"/>
</dbReference>
<dbReference type="PROSITE" id="PS00906">
    <property type="entry name" value="UROD_1"/>
    <property type="match status" value="1"/>
</dbReference>
<dbReference type="PROSITE" id="PS00907">
    <property type="entry name" value="UROD_2"/>
    <property type="match status" value="1"/>
</dbReference>
<name>DCUP_BRUMB</name>
<proteinExistence type="inferred from homology"/>
<evidence type="ECO:0000255" key="1">
    <source>
        <dbReference type="HAMAP-Rule" id="MF_00218"/>
    </source>
</evidence>
<sequence>MNLKVLKVIDGETVFPPPIWMMRQAGRYLPEYRETRKKAGSFLDLCYSPDLAVEVTLQPIRRFGFDAAILFSDILVVPHALGRDLRFEEGKGPLMTPIDADEIFWLETEGVAKRLEPVYETVRLVREQLPDETTLLGFCGAPWTVATYMIAGHGTPDQAPARLFAYRFPEAFEKLLNDLADVSAEYLIEQLGAGADAVQIFDSWSGVLDEDCFERFCIRPVARIVQKVRAVYPQARIIGFPKGAGMLYAGYREKTGVDMLGLDWSVPLSFAALLQEEGAVQGNLDPLRVVAGGNALDEGVDAILERMGQGPLVFNLGHGITPQAPIENVQRMIDRVRGGKS</sequence>
<gene>
    <name evidence="1" type="primary">hemE</name>
    <name type="ordered locus">BMEA_A2127</name>
</gene>
<keyword id="KW-0963">Cytoplasm</keyword>
<keyword id="KW-0210">Decarboxylase</keyword>
<keyword id="KW-0456">Lyase</keyword>
<keyword id="KW-0627">Porphyrin biosynthesis</keyword>
<reference key="1">
    <citation type="submission" date="2009-03" db="EMBL/GenBank/DDBJ databases">
        <title>Brucella melitensis ATCC 23457 whole genome shotgun sequencing project.</title>
        <authorList>
            <person name="Setubal J.C."/>
            <person name="Boyle S."/>
            <person name="Crasta O.R."/>
            <person name="Gillespie J.J."/>
            <person name="Kenyon R.W."/>
            <person name="Lu J."/>
            <person name="Mane S."/>
            <person name="Nagrani S."/>
            <person name="Shallom J.M."/>
            <person name="Shallom S."/>
            <person name="Shukla M."/>
            <person name="Snyder E.E."/>
            <person name="Sobral B.W."/>
            <person name="Wattam A.R."/>
            <person name="Will R."/>
            <person name="Williams K."/>
            <person name="Yoo H."/>
            <person name="Munk C."/>
            <person name="Tapia R."/>
            <person name="Han C."/>
            <person name="Detter J.C."/>
            <person name="Bruce D."/>
            <person name="Brettin T.S."/>
        </authorList>
    </citation>
    <scope>NUCLEOTIDE SEQUENCE [LARGE SCALE GENOMIC DNA]</scope>
    <source>
        <strain>ATCC 23457</strain>
    </source>
</reference>
<accession>C0RFV3</accession>
<protein>
    <recommendedName>
        <fullName evidence="1">Uroporphyrinogen decarboxylase</fullName>
        <shortName evidence="1">UPD</shortName>
        <shortName evidence="1">URO-D</shortName>
        <ecNumber evidence="1">4.1.1.37</ecNumber>
    </recommendedName>
</protein>
<comment type="function">
    <text evidence="1">Catalyzes the decarboxylation of four acetate groups of uroporphyrinogen-III to yield coproporphyrinogen-III.</text>
</comment>
<comment type="catalytic activity">
    <reaction evidence="1">
        <text>uroporphyrinogen III + 4 H(+) = coproporphyrinogen III + 4 CO2</text>
        <dbReference type="Rhea" id="RHEA:19865"/>
        <dbReference type="ChEBI" id="CHEBI:15378"/>
        <dbReference type="ChEBI" id="CHEBI:16526"/>
        <dbReference type="ChEBI" id="CHEBI:57308"/>
        <dbReference type="ChEBI" id="CHEBI:57309"/>
        <dbReference type="EC" id="4.1.1.37"/>
    </reaction>
</comment>
<comment type="pathway">
    <text evidence="1">Porphyrin-containing compound metabolism; protoporphyrin-IX biosynthesis; coproporphyrinogen-III from 5-aminolevulinate: step 4/4.</text>
</comment>
<comment type="subunit">
    <text evidence="1">Homodimer.</text>
</comment>
<comment type="subcellular location">
    <subcellularLocation>
        <location evidence="1">Cytoplasm</location>
    </subcellularLocation>
</comment>
<comment type="similarity">
    <text evidence="1">Belongs to the uroporphyrinogen decarboxylase family.</text>
</comment>
<organism>
    <name type="scientific">Brucella melitensis biotype 2 (strain ATCC 23457)</name>
    <dbReference type="NCBI Taxonomy" id="546272"/>
    <lineage>
        <taxon>Bacteria</taxon>
        <taxon>Pseudomonadati</taxon>
        <taxon>Pseudomonadota</taxon>
        <taxon>Alphaproteobacteria</taxon>
        <taxon>Hyphomicrobiales</taxon>
        <taxon>Brucellaceae</taxon>
        <taxon>Brucella/Ochrobactrum group</taxon>
        <taxon>Brucella</taxon>
    </lineage>
</organism>
<feature type="chain" id="PRO_1000197511" description="Uroporphyrinogen decarboxylase">
    <location>
        <begin position="1"/>
        <end position="341"/>
    </location>
</feature>
<feature type="binding site" evidence="1">
    <location>
        <begin position="23"/>
        <end position="27"/>
    </location>
    <ligand>
        <name>substrate</name>
    </ligand>
</feature>
<feature type="binding site" evidence="1">
    <location>
        <position position="73"/>
    </location>
    <ligand>
        <name>substrate</name>
    </ligand>
</feature>
<feature type="binding site" evidence="1">
    <location>
        <position position="148"/>
    </location>
    <ligand>
        <name>substrate</name>
    </ligand>
</feature>
<feature type="binding site" evidence="1">
    <location>
        <position position="203"/>
    </location>
    <ligand>
        <name>substrate</name>
    </ligand>
</feature>
<feature type="binding site" evidence="1">
    <location>
        <position position="318"/>
    </location>
    <ligand>
        <name>substrate</name>
    </ligand>
</feature>
<feature type="site" description="Transition state stabilizer" evidence="1">
    <location>
        <position position="73"/>
    </location>
</feature>